<dbReference type="EMBL" id="Z72504">
    <property type="protein sequence ID" value="CAA96603.3"/>
    <property type="molecule type" value="Genomic_DNA"/>
</dbReference>
<dbReference type="PIR" id="T19552">
    <property type="entry name" value="T19552"/>
</dbReference>
<dbReference type="RefSeq" id="NP_502249.3">
    <property type="nucleotide sequence ID" value="NM_069848.8"/>
</dbReference>
<dbReference type="SMR" id="Q18297"/>
<dbReference type="BioGRID" id="43213">
    <property type="interactions" value="1"/>
</dbReference>
<dbReference type="DIP" id="DIP-61523N"/>
<dbReference type="FunCoup" id="Q18297">
    <property type="interactions" value="36"/>
</dbReference>
<dbReference type="STRING" id="6239.C29E6.2a.1"/>
<dbReference type="TCDB" id="1.A.4.6.5">
    <property type="family name" value="the transient receptor potential ca2+/cation channel (trp-cc) family"/>
</dbReference>
<dbReference type="GlyCosmos" id="Q18297">
    <property type="glycosylation" value="2 sites, No reported glycans"/>
</dbReference>
<dbReference type="PaxDb" id="6239-C29E6.2a"/>
<dbReference type="EnsemblMetazoa" id="C29E6.2a.1">
    <property type="protein sequence ID" value="C29E6.2a.1"/>
    <property type="gene ID" value="WBGene00007801"/>
</dbReference>
<dbReference type="GeneID" id="178118"/>
<dbReference type="KEGG" id="cel:CELE_C29E6.2"/>
<dbReference type="UCSC" id="C29E6.2">
    <property type="organism name" value="c. elegans"/>
</dbReference>
<dbReference type="AGR" id="WB:WBGene00007801"/>
<dbReference type="CTD" id="178118"/>
<dbReference type="WormBase" id="C29E6.2a">
    <property type="protein sequence ID" value="CE42588"/>
    <property type="gene ID" value="WBGene00007801"/>
    <property type="gene designation" value="trpa-1"/>
</dbReference>
<dbReference type="eggNOG" id="KOG0510">
    <property type="taxonomic scope" value="Eukaryota"/>
</dbReference>
<dbReference type="GeneTree" id="ENSGT00940000173888"/>
<dbReference type="InParanoid" id="Q18297"/>
<dbReference type="OMA" id="PLFIRVE"/>
<dbReference type="OrthoDB" id="1661883at2759"/>
<dbReference type="PhylomeDB" id="Q18297"/>
<dbReference type="PRO" id="PR:Q18297"/>
<dbReference type="Proteomes" id="UP000001940">
    <property type="component" value="Chromosome IV"/>
</dbReference>
<dbReference type="Bgee" id="WBGene00007801">
    <property type="expression patterns" value="Expressed in pharyngeal muscle cell (C elegans) and 3 other cell types or tissues"/>
</dbReference>
<dbReference type="ExpressionAtlas" id="Q18297">
    <property type="expression patterns" value="baseline and differential"/>
</dbReference>
<dbReference type="GO" id="GO:0043025">
    <property type="term" value="C:neuronal cell body"/>
    <property type="evidence" value="ECO:0000314"/>
    <property type="project" value="WormBase"/>
</dbReference>
<dbReference type="GO" id="GO:0097730">
    <property type="term" value="C:non-motile cilium"/>
    <property type="evidence" value="ECO:0000314"/>
    <property type="project" value="WormBase"/>
</dbReference>
<dbReference type="GO" id="GO:0005886">
    <property type="term" value="C:plasma membrane"/>
    <property type="evidence" value="ECO:0007669"/>
    <property type="project" value="UniProtKB-SubCell"/>
</dbReference>
<dbReference type="GO" id="GO:0005216">
    <property type="term" value="F:monoatomic ion channel activity"/>
    <property type="evidence" value="ECO:0007669"/>
    <property type="project" value="InterPro"/>
</dbReference>
<dbReference type="Gene3D" id="1.25.40.20">
    <property type="entry name" value="Ankyrin repeat-containing domain"/>
    <property type="match status" value="4"/>
</dbReference>
<dbReference type="InterPro" id="IPR002110">
    <property type="entry name" value="Ankyrin_rpt"/>
</dbReference>
<dbReference type="InterPro" id="IPR036770">
    <property type="entry name" value="Ankyrin_rpt-contain_sf"/>
</dbReference>
<dbReference type="InterPro" id="IPR005821">
    <property type="entry name" value="Ion_trans_dom"/>
</dbReference>
<dbReference type="InterPro" id="IPR052076">
    <property type="entry name" value="TRP_cation_channel"/>
</dbReference>
<dbReference type="PANTHER" id="PTHR47143:SF1">
    <property type="entry name" value="ION_TRANS DOMAIN-CONTAINING PROTEIN"/>
    <property type="match status" value="1"/>
</dbReference>
<dbReference type="PANTHER" id="PTHR47143">
    <property type="entry name" value="TRANSIENT RECEPTOR POTENTIAL CATION CHANNEL PROTEIN PAINLESS"/>
    <property type="match status" value="1"/>
</dbReference>
<dbReference type="Pfam" id="PF12796">
    <property type="entry name" value="Ank_2"/>
    <property type="match status" value="6"/>
</dbReference>
<dbReference type="Pfam" id="PF00520">
    <property type="entry name" value="Ion_trans"/>
    <property type="match status" value="1"/>
</dbReference>
<dbReference type="SMART" id="SM00248">
    <property type="entry name" value="ANK"/>
    <property type="match status" value="17"/>
</dbReference>
<dbReference type="SUPFAM" id="SSF48403">
    <property type="entry name" value="Ankyrin repeat"/>
    <property type="match status" value="2"/>
</dbReference>
<dbReference type="PROSITE" id="PS50297">
    <property type="entry name" value="ANK_REP_REGION"/>
    <property type="match status" value="1"/>
</dbReference>
<dbReference type="PROSITE" id="PS50088">
    <property type="entry name" value="ANK_REPEAT"/>
    <property type="match status" value="9"/>
</dbReference>
<comment type="function">
    <text evidence="3">Receptor-activated non-selective cation channel involved in the nose-touch response and foraging behavior. Contributes to the neural responses of sensory neurons to touch, particularly after repeated mechanical stimulation. Has no apparent role in thermosensory or chemosensory behaviors.</text>
</comment>
<comment type="subunit">
    <text evidence="1">Homotetramer.</text>
</comment>
<comment type="subcellular location">
    <subcellularLocation>
        <location evidence="3">Cell membrane</location>
        <topology evidence="4">Multi-pass membrane protein</topology>
    </subcellularLocation>
</comment>
<comment type="tissue specificity">
    <text evidence="3">Expressed in many sensory neurons, including OLQ and IL1 neurons.</text>
</comment>
<comment type="disruption phenotype">
    <text evidence="3">Worms exhibit specific defects in mechanosensory behaviors: abnormal head withdrawal reflex, defective reversal behavior in response to nose-touch and foraging behaviors.</text>
</comment>
<comment type="similarity">
    <text evidence="4">Belongs to the transient receptor (TC 1.A.4) family.</text>
</comment>
<comment type="online information" name="Protein Spotlight">
    <link uri="https://www.proteinspotlight.org/back_issues/082"/>
    <text>The power behind pain - Issue 82 of May 2007</text>
</comment>
<gene>
    <name type="primary">trpa-1</name>
    <name type="ORF">C29E6.2</name>
</gene>
<sequence length="1211" mass="138450">MSKKSLGLDVRLELEGLISNDDTIRSEKDGRQASIFRVAELDARTEADNLRSIIHQSAREGNVNALQEALLKAPLAVNAQDGDFMTPLHYAARYGNYDAVKLLLSKNALPNTKNREGDTPLHIASKYIYGYSDICSIIDEDQADSARKYNTATKKIINALVSENAEIDPVNKYQLTPLHYAAMKSNFSALHALIKLKADVDAEDDNKMTPLLLACVHGSQEIIQELIKANSNVTKRDQRLNTVFHIVALRGEPEYLEMMMDHDPVEAIKALNLFNNEKKTPLRMAVEGNHPETLKKILQMEKKNSCKWMDREKELIHFAAEKGFLEVLKALVEAGGNKNELNEVKAVPLHVAAQMNQLEVVSYLIEEEKDNIDVVDEQGLTPLMMAVTHDSKKCVEYLIAKKANLTITDKDERTPVFIGAKFNALSSVEYILDHLRKKNKETERSALKSPTRNTLRIVSEDVRRTMVNMVDRDQNTPMHIVASNGYLEMMQLLQKHGASITQVNEDEETALHRAAIGGQTGAVRQLLEWDIRLLLMKDEMGNSALHLAARSGHDATTKVLLDNGADKEAKNSYQKTPLQVAVDSGKLETCQRLVAKGAQIESSSDTKTVLHTAAFYGNESIVRYFIAEGVTIDRRDEEGKTAFDIACENDHKDVARAFLETDQWKNLMIPCDVIPLDKHRNPVNMKRRTPFRTLLTKFPELASFVMDNCIEKSKEETDSTQSVAYNFEFLDDTYMMRCVSDDGTGEQLIGCKSAYDEDFKLEKDAQSYASNYDRVYKYHPLKLMADAEKLHLLNHPLSKALLKYKWNRLGRPMYYFALFMYLVFIVSLTQYVRHTKAPYNVWNEESYYDSEYFDENETCPQINTTKPDVVWKIIIQTLAVCQILVECFQLFQRKFAYLVNWENWIDCFIYSTALITVYDFSECSATSGVRQNWQWILAALCIFFGWINLLFMIRKMPRFGIFVVMFVDIVKTFFRFFPVFVLFIIAFSSSFYVILQNRPEFSTIFMSPLKTTVMMIGEFEFTGIFHGDETTHAEKMFGPAHTAVACALFFFFCIIMTILLMNLLVGLAVDDIKGVQEKAELKRLAMQVDLVLQIEASLHFFIQRTKKYATCRYATFPYGKLHKTGFAGWWSNFRRRFGLSVSTDPEIDEMYEREAEFTSEMTQKLQNQAAKLKNIQENIDVMYEKQVRLEAIIAKLATGLNINIELEEKDN</sequence>
<keyword id="KW-0040">ANK repeat</keyword>
<keyword id="KW-1003">Cell membrane</keyword>
<keyword id="KW-0175">Coiled coil</keyword>
<keyword id="KW-0325">Glycoprotein</keyword>
<keyword id="KW-0407">Ion channel</keyword>
<keyword id="KW-0406">Ion transport</keyword>
<keyword id="KW-0472">Membrane</keyword>
<keyword id="KW-1185">Reference proteome</keyword>
<keyword id="KW-0677">Repeat</keyword>
<keyword id="KW-0716">Sensory transduction</keyword>
<keyword id="KW-0812">Transmembrane</keyword>
<keyword id="KW-1133">Transmembrane helix</keyword>
<keyword id="KW-0813">Transport</keyword>
<reference key="1">
    <citation type="journal article" date="1998" name="Science">
        <title>Genome sequence of the nematode C. elegans: a platform for investigating biology.</title>
        <authorList>
            <consortium name="The C. elegans sequencing consortium"/>
        </authorList>
    </citation>
    <scope>NUCLEOTIDE SEQUENCE [LARGE SCALE GENOMIC DNA]</scope>
    <source>
        <strain>Bristol N2</strain>
    </source>
</reference>
<reference key="2">
    <citation type="journal article" date="2007" name="Nat. Neurosci.">
        <title>Caenorhabditis elegans TRPA-1 functions in mechanosensation.</title>
        <authorList>
            <person name="Kindt K.S."/>
            <person name="Viswanath V."/>
            <person name="Macpherson L."/>
            <person name="Quast K."/>
            <person name="Hu H."/>
            <person name="Patapoutian A."/>
            <person name="Schafer W.R."/>
        </authorList>
    </citation>
    <scope>FUNCTION</scope>
    <scope>SUBCELLULAR LOCATION</scope>
    <scope>TISSUE SPECIFICITY</scope>
    <scope>DISRUPTION PHENOTYPE</scope>
</reference>
<evidence type="ECO:0000250" key="1">
    <source>
        <dbReference type="UniProtKB" id="O75762"/>
    </source>
</evidence>
<evidence type="ECO:0000255" key="2"/>
<evidence type="ECO:0000269" key="3">
    <source>
    </source>
</evidence>
<evidence type="ECO:0000305" key="4"/>
<organism>
    <name type="scientific">Caenorhabditis elegans</name>
    <dbReference type="NCBI Taxonomy" id="6239"/>
    <lineage>
        <taxon>Eukaryota</taxon>
        <taxon>Metazoa</taxon>
        <taxon>Ecdysozoa</taxon>
        <taxon>Nematoda</taxon>
        <taxon>Chromadorea</taxon>
        <taxon>Rhabditida</taxon>
        <taxon>Rhabditina</taxon>
        <taxon>Rhabditomorpha</taxon>
        <taxon>Rhabditoidea</taxon>
        <taxon>Rhabditidae</taxon>
        <taxon>Peloderinae</taxon>
        <taxon>Caenorhabditis</taxon>
    </lineage>
</organism>
<name>TRPA1_CAEEL</name>
<accession>Q18297</accession>
<feature type="chain" id="PRO_0000215372" description="Transient receptor potential cation channel subfamily A member 1 homolog">
    <location>
        <begin position="1"/>
        <end position="1211"/>
    </location>
</feature>
<feature type="topological domain" description="Cytoplasmic" evidence="2">
    <location>
        <begin position="1"/>
        <end position="811"/>
    </location>
</feature>
<feature type="transmembrane region" description="Helical; Name=1" evidence="2">
    <location>
        <begin position="812"/>
        <end position="832"/>
    </location>
</feature>
<feature type="topological domain" description="Extracellular" evidence="2">
    <location>
        <begin position="833"/>
        <end position="870"/>
    </location>
</feature>
<feature type="transmembrane region" description="Helical; Name=2" evidence="2">
    <location>
        <begin position="871"/>
        <end position="891"/>
    </location>
</feature>
<feature type="topological domain" description="Cytoplasmic" evidence="2">
    <location>
        <begin position="892"/>
        <end position="894"/>
    </location>
</feature>
<feature type="transmembrane region" description="Helical; Name=3" evidence="2">
    <location>
        <begin position="895"/>
        <end position="915"/>
    </location>
</feature>
<feature type="topological domain" description="Extracellular" evidence="2">
    <location>
        <begin position="916"/>
        <end position="932"/>
    </location>
</feature>
<feature type="transmembrane region" description="Helical; Name=4" evidence="2">
    <location>
        <begin position="933"/>
        <end position="953"/>
    </location>
</feature>
<feature type="topological domain" description="Cytoplasmic" evidence="2">
    <location>
        <begin position="954"/>
        <end position="975"/>
    </location>
</feature>
<feature type="transmembrane region" description="Helical; Name=5" evidence="2">
    <location>
        <begin position="976"/>
        <end position="996"/>
    </location>
</feature>
<feature type="topological domain" description="Extracellular" evidence="2">
    <location>
        <begin position="997"/>
        <end position="1004"/>
    </location>
</feature>
<feature type="intramembrane region" description="Pore-forming" evidence="1">
    <location>
        <begin position="1005"/>
        <end position="1025"/>
    </location>
</feature>
<feature type="topological domain" description="Extracellular" evidence="2">
    <location>
        <begin position="1026"/>
        <end position="1048"/>
    </location>
</feature>
<feature type="transmembrane region" description="Helical; Name=6" evidence="2">
    <location>
        <begin position="1049"/>
        <end position="1069"/>
    </location>
</feature>
<feature type="topological domain" description="Cytoplasmic" evidence="2">
    <location>
        <begin position="1070"/>
        <end position="1193"/>
    </location>
</feature>
<feature type="repeat" description="ANK 1">
    <location>
        <begin position="49"/>
        <end position="79"/>
    </location>
</feature>
<feature type="repeat" description="ANK 2">
    <location>
        <begin position="83"/>
        <end position="112"/>
    </location>
</feature>
<feature type="repeat" description="ANK 3">
    <location>
        <begin position="116"/>
        <end position="169"/>
    </location>
</feature>
<feature type="repeat" description="ANK 4">
    <location>
        <begin position="173"/>
        <end position="202"/>
    </location>
</feature>
<feature type="repeat" description="ANK 5">
    <location>
        <begin position="206"/>
        <end position="235"/>
    </location>
</feature>
<feature type="repeat" description="ANK 6">
    <location>
        <begin position="239"/>
        <end position="270"/>
    </location>
</feature>
<feature type="repeat" description="ANK 7">
    <location>
        <begin position="277"/>
        <end position="306"/>
    </location>
</feature>
<feature type="repeat" description="ANK 8">
    <location>
        <begin position="311"/>
        <end position="340"/>
    </location>
</feature>
<feature type="repeat" description="ANK 9">
    <location>
        <begin position="344"/>
        <end position="374"/>
    </location>
</feature>
<feature type="repeat" description="ANK 10">
    <location>
        <begin position="378"/>
        <end position="407"/>
    </location>
</feature>
<feature type="repeat" description="ANK 11">
    <location>
        <begin position="411"/>
        <end position="440"/>
    </location>
</feature>
<feature type="repeat" description="ANK 12">
    <location>
        <begin position="473"/>
        <end position="502"/>
    </location>
</feature>
<feature type="repeat" description="ANK 13">
    <location>
        <begin position="506"/>
        <end position="535"/>
    </location>
</feature>
<feature type="repeat" description="ANK 14">
    <location>
        <begin position="540"/>
        <end position="569"/>
    </location>
</feature>
<feature type="repeat" description="ANK 15">
    <location>
        <begin position="573"/>
        <end position="602"/>
    </location>
</feature>
<feature type="repeat" description="ANK 16">
    <location>
        <begin position="605"/>
        <end position="634"/>
    </location>
</feature>
<feature type="repeat" description="ANK 17">
    <location>
        <begin position="638"/>
        <end position="669"/>
    </location>
</feature>
<feature type="coiled-coil region" evidence="2">
    <location>
        <begin position="1149"/>
        <end position="1191"/>
    </location>
</feature>
<feature type="glycosylation site" description="N-linked (GlcNAc...) asparagine" evidence="2">
    <location>
        <position position="856"/>
    </location>
</feature>
<feature type="glycosylation site" description="N-linked (GlcNAc...) asparagine" evidence="2">
    <location>
        <position position="863"/>
    </location>
</feature>
<proteinExistence type="evidence at transcript level"/>
<protein>
    <recommendedName>
        <fullName>Transient receptor potential cation channel subfamily A member 1 homolog</fullName>
    </recommendedName>
</protein>